<feature type="chain" id="PRO_0000122684" description="Protein RecA">
    <location>
        <begin position="1"/>
        <end position="354"/>
    </location>
</feature>
<feature type="binding site" evidence="1">
    <location>
        <begin position="67"/>
        <end position="74"/>
    </location>
    <ligand>
        <name>ATP</name>
        <dbReference type="ChEBI" id="CHEBI:30616"/>
    </ligand>
</feature>
<protein>
    <recommendedName>
        <fullName evidence="1">Protein RecA</fullName>
    </recommendedName>
    <alternativeName>
        <fullName evidence="1">Recombinase A</fullName>
    </alternativeName>
</protein>
<name>RECA_CHLMU</name>
<proteinExistence type="inferred from homology"/>
<comment type="function">
    <text evidence="1">Can catalyze the hydrolysis of ATP in the presence of single-stranded DNA, the ATP-dependent uptake of single-stranded DNA by duplex DNA, and the ATP-dependent hybridization of homologous single-stranded DNAs. It interacts with LexA causing its activation and leading to its autocatalytic cleavage.</text>
</comment>
<comment type="subcellular location">
    <subcellularLocation>
        <location evidence="1">Cytoplasm</location>
    </subcellularLocation>
</comment>
<comment type="similarity">
    <text evidence="1">Belongs to the RecA family.</text>
</comment>
<reference key="1">
    <citation type="journal article" date="2000" name="Nucleic Acids Res.">
        <title>Genome sequences of Chlamydia trachomatis MoPn and Chlamydia pneumoniae AR39.</title>
        <authorList>
            <person name="Read T.D."/>
            <person name="Brunham R.C."/>
            <person name="Shen C."/>
            <person name="Gill S.R."/>
            <person name="Heidelberg J.F."/>
            <person name="White O."/>
            <person name="Hickey E.K."/>
            <person name="Peterson J.D."/>
            <person name="Utterback T.R."/>
            <person name="Berry K.J."/>
            <person name="Bass S."/>
            <person name="Linher K.D."/>
            <person name="Weidman J.F."/>
            <person name="Khouri H.M."/>
            <person name="Craven B."/>
            <person name="Bowman C."/>
            <person name="Dodson R.J."/>
            <person name="Gwinn M.L."/>
            <person name="Nelson W.C."/>
            <person name="DeBoy R.T."/>
            <person name="Kolonay J.F."/>
            <person name="McClarty G."/>
            <person name="Salzberg S.L."/>
            <person name="Eisen J.A."/>
            <person name="Fraser C.M."/>
        </authorList>
    </citation>
    <scope>NUCLEOTIDE SEQUENCE [LARGE SCALE GENOMIC DNA]</scope>
    <source>
        <strain>MoPn / Nigg</strain>
    </source>
</reference>
<keyword id="KW-0067">ATP-binding</keyword>
<keyword id="KW-0963">Cytoplasm</keyword>
<keyword id="KW-0227">DNA damage</keyword>
<keyword id="KW-0233">DNA recombination</keyword>
<keyword id="KW-0234">DNA repair</keyword>
<keyword id="KW-0238">DNA-binding</keyword>
<keyword id="KW-0547">Nucleotide-binding</keyword>
<keyword id="KW-0742">SOS response</keyword>
<sequence>MSVPDRKRALEAAIAYIEKQFGAGSIMSLGKHSSAHEISTIKTGALSLDLALGIGGVPKGRIIEIFGPESSGKTTLATHIVANAQKMGGVAAYIDAEHALDPNYAALIGANINDLMISQPDCGEDALSIAELLARSGAVDVIVIDSVAALVPKSELEGEIGDVHVGLQARMMSQALRKLTATLARTNTCAIFINQIREKIGVSFGNPETTTGGRALKFYSSIRMDIRRIGAIKGGENFDIGNRIKVKVAKNKLAPPFRTAEFDILFNEGISSAGCIIDLAVEKNIIDKKGSWFNYQDRKLGQGREAVREELKRNKELFQELERRIYESVQASSSQALASACLDQEAREVAEAAK</sequence>
<accession>Q9PLS6</accession>
<evidence type="ECO:0000255" key="1">
    <source>
        <dbReference type="HAMAP-Rule" id="MF_00268"/>
    </source>
</evidence>
<dbReference type="EMBL" id="AE002160">
    <property type="protein sequence ID" value="AAF38911.1"/>
    <property type="molecule type" value="Genomic_DNA"/>
</dbReference>
<dbReference type="PIR" id="F81750">
    <property type="entry name" value="F81750"/>
</dbReference>
<dbReference type="RefSeq" id="WP_010229135.1">
    <property type="nucleotide sequence ID" value="NZ_CP063055.1"/>
</dbReference>
<dbReference type="SMR" id="Q9PLS6"/>
<dbReference type="GeneID" id="1245543"/>
<dbReference type="KEGG" id="cmu:TC_0019"/>
<dbReference type="eggNOG" id="COG0468">
    <property type="taxonomic scope" value="Bacteria"/>
</dbReference>
<dbReference type="HOGENOM" id="CLU_040469_3_2_0"/>
<dbReference type="OrthoDB" id="9776733at2"/>
<dbReference type="Proteomes" id="UP000000800">
    <property type="component" value="Chromosome"/>
</dbReference>
<dbReference type="GO" id="GO:0005829">
    <property type="term" value="C:cytosol"/>
    <property type="evidence" value="ECO:0007669"/>
    <property type="project" value="TreeGrafter"/>
</dbReference>
<dbReference type="GO" id="GO:0005524">
    <property type="term" value="F:ATP binding"/>
    <property type="evidence" value="ECO:0007669"/>
    <property type="project" value="UniProtKB-UniRule"/>
</dbReference>
<dbReference type="GO" id="GO:0016887">
    <property type="term" value="F:ATP hydrolysis activity"/>
    <property type="evidence" value="ECO:0007669"/>
    <property type="project" value="InterPro"/>
</dbReference>
<dbReference type="GO" id="GO:0140664">
    <property type="term" value="F:ATP-dependent DNA damage sensor activity"/>
    <property type="evidence" value="ECO:0007669"/>
    <property type="project" value="InterPro"/>
</dbReference>
<dbReference type="GO" id="GO:0003684">
    <property type="term" value="F:damaged DNA binding"/>
    <property type="evidence" value="ECO:0007669"/>
    <property type="project" value="UniProtKB-UniRule"/>
</dbReference>
<dbReference type="GO" id="GO:0003697">
    <property type="term" value="F:single-stranded DNA binding"/>
    <property type="evidence" value="ECO:0007669"/>
    <property type="project" value="UniProtKB-UniRule"/>
</dbReference>
<dbReference type="GO" id="GO:0006310">
    <property type="term" value="P:DNA recombination"/>
    <property type="evidence" value="ECO:0007669"/>
    <property type="project" value="UniProtKB-UniRule"/>
</dbReference>
<dbReference type="GO" id="GO:0006281">
    <property type="term" value="P:DNA repair"/>
    <property type="evidence" value="ECO:0007669"/>
    <property type="project" value="UniProtKB-UniRule"/>
</dbReference>
<dbReference type="GO" id="GO:0009432">
    <property type="term" value="P:SOS response"/>
    <property type="evidence" value="ECO:0007669"/>
    <property type="project" value="UniProtKB-UniRule"/>
</dbReference>
<dbReference type="CDD" id="cd00983">
    <property type="entry name" value="RecA"/>
    <property type="match status" value="1"/>
</dbReference>
<dbReference type="FunFam" id="3.40.50.300:FF:000087">
    <property type="entry name" value="Recombinase RecA"/>
    <property type="match status" value="1"/>
</dbReference>
<dbReference type="Gene3D" id="3.40.50.300">
    <property type="entry name" value="P-loop containing nucleotide triphosphate hydrolases"/>
    <property type="match status" value="1"/>
</dbReference>
<dbReference type="HAMAP" id="MF_00268">
    <property type="entry name" value="RecA"/>
    <property type="match status" value="1"/>
</dbReference>
<dbReference type="InterPro" id="IPR003593">
    <property type="entry name" value="AAA+_ATPase"/>
</dbReference>
<dbReference type="InterPro" id="IPR013765">
    <property type="entry name" value="DNA_recomb/repair_RecA"/>
</dbReference>
<dbReference type="InterPro" id="IPR020584">
    <property type="entry name" value="DNA_recomb/repair_RecA_CS"/>
</dbReference>
<dbReference type="InterPro" id="IPR027417">
    <property type="entry name" value="P-loop_NTPase"/>
</dbReference>
<dbReference type="InterPro" id="IPR049261">
    <property type="entry name" value="RecA-like_C"/>
</dbReference>
<dbReference type="InterPro" id="IPR049428">
    <property type="entry name" value="RecA-like_N"/>
</dbReference>
<dbReference type="InterPro" id="IPR020588">
    <property type="entry name" value="RecA_ATP-bd"/>
</dbReference>
<dbReference type="InterPro" id="IPR023400">
    <property type="entry name" value="RecA_C_sf"/>
</dbReference>
<dbReference type="InterPro" id="IPR020587">
    <property type="entry name" value="RecA_monomer-monomer_interface"/>
</dbReference>
<dbReference type="NCBIfam" id="TIGR02012">
    <property type="entry name" value="tigrfam_recA"/>
    <property type="match status" value="1"/>
</dbReference>
<dbReference type="PANTHER" id="PTHR45900:SF1">
    <property type="entry name" value="MITOCHONDRIAL DNA REPAIR PROTEIN RECA HOMOLOG-RELATED"/>
    <property type="match status" value="1"/>
</dbReference>
<dbReference type="PANTHER" id="PTHR45900">
    <property type="entry name" value="RECA"/>
    <property type="match status" value="1"/>
</dbReference>
<dbReference type="Pfam" id="PF00154">
    <property type="entry name" value="RecA"/>
    <property type="match status" value="1"/>
</dbReference>
<dbReference type="Pfam" id="PF21096">
    <property type="entry name" value="RecA_C"/>
    <property type="match status" value="1"/>
</dbReference>
<dbReference type="PRINTS" id="PR00142">
    <property type="entry name" value="RECA"/>
</dbReference>
<dbReference type="SMART" id="SM00382">
    <property type="entry name" value="AAA"/>
    <property type="match status" value="1"/>
</dbReference>
<dbReference type="SUPFAM" id="SSF52540">
    <property type="entry name" value="P-loop containing nucleoside triphosphate hydrolases"/>
    <property type="match status" value="1"/>
</dbReference>
<dbReference type="SUPFAM" id="SSF54752">
    <property type="entry name" value="RecA protein, C-terminal domain"/>
    <property type="match status" value="1"/>
</dbReference>
<dbReference type="PROSITE" id="PS00321">
    <property type="entry name" value="RECA_1"/>
    <property type="match status" value="1"/>
</dbReference>
<dbReference type="PROSITE" id="PS50162">
    <property type="entry name" value="RECA_2"/>
    <property type="match status" value="1"/>
</dbReference>
<dbReference type="PROSITE" id="PS50163">
    <property type="entry name" value="RECA_3"/>
    <property type="match status" value="1"/>
</dbReference>
<gene>
    <name evidence="1" type="primary">recA</name>
    <name type="ordered locus">TC_0019</name>
</gene>
<organism>
    <name type="scientific">Chlamydia muridarum (strain MoPn / Nigg)</name>
    <dbReference type="NCBI Taxonomy" id="243161"/>
    <lineage>
        <taxon>Bacteria</taxon>
        <taxon>Pseudomonadati</taxon>
        <taxon>Chlamydiota</taxon>
        <taxon>Chlamydiia</taxon>
        <taxon>Chlamydiales</taxon>
        <taxon>Chlamydiaceae</taxon>
        <taxon>Chlamydia/Chlamydophila group</taxon>
        <taxon>Chlamydia</taxon>
    </lineage>
</organism>